<sequence>MTRLMCLLMSLSIFVRGFDSQFVDMSPASNASECLESQVDAAAFSKLVWPYPIDPAKVDGIIYPLGRTYSNITLEYTGLFPLQGDLGMQYLYSVSHAVGNDGDPTKAYISNYSLLVNDFDNGFVVRIGAAANSTGTIVISPSVNTKIKKAYPAFILGSSLTNTSAGKPLYANYSLTIIPDGCGTVLHAFYCILKPRTGNRCPSGSDYNAYFIYETIHSDCQSTINRNASLNSFKSFFDLVNCTFFNSWDITADETKEWFGITQDTQGVHLHSSRKGDLYGGNMFRFATLPVYEGIKYYTVIPRSFRSKANKREAWAAFYVYKLHQLTYLLDFSVDGYIRRAIDCGHDDLSQLHCSYTSFEVDTGVYSVSSYEASATGTFIEQPNVTECDFSPMLTGVAPQVYNFKRLVFSNCNYNLTKLLSLFAVDEFSCNGISPDAIARGCYSTLTVDYFAYPLSMKSYIRPGSAGNIPLYNYKQSFANPTCRVMASVPDNVTITKPGAYGYISKCSRLTGVNQDIETPLYINPGEYSICRDFAPLGFSEDGQVFKRTLTQFEGGGLLIGVGTRVPMTANLEMGFVISVQYGTGTDSVCPMLDLGDSLTITNRLGKCVDYSLYGVTGRGVFQNCTAVGVKQQRFVYDSFDNLVGYYSDDGNYYCVRPCVSVPVSVIYDKSTNLHATLFGSVACEHVTTMMSQFSRLTQSNLRRRDSNTPLQTAVGCVIGLSNNSLVVSDCKLPLGQSLCAVPPVSMFRSYSASQFQLAVLNYTSPIVVTPINSSGFTAAIPTNFSFSLTQEYIETSIQKVTVDCKQYVCNGFTRCEKLLVEYGQFCSKINQALHGANLRQDESVYSLYSNIKTTSTQTLEYGLNGDFNLTLLQVPQIGGSSYRSAIEDLLFDKVTIADPGYMQGYDDCMKQGPQSARDLICAQYVSGYKVLPPLYDPNMEAAYTSSLLGSIAGAGWTAGLSSFAAIPFAQSMFYRLNGVGITQQVLSENQKLIANKFNQALGAMQTGFTTSNLAFSKVQDAVNANAQALSKLASELSNTFGAISSSISDILARLDTVEQDAQIDRLINGRLTSLNAFVSQQLVRSETAARSAQLASDKVNECVKSQSKRNGFCGSGTHIVSFVVNAPNGFYFFHVGYVPTNYTNVTAAYGLCNHNNPPLCIAPIDGYFITNQTTTYSVDTEWYYTGSSFFKPEPITQANSRYVSSDVKFEKLENNLPPPLLENSTDVDFKDELEEFFKNVTSHGPNFAEISKINTTLLDLSDEMAILQEVVKQLNDSYIDLKELGNYTYYNKWPWYIWLGFIAGLVALLLCVFFLLCCTGCGTSCLGKMKCKNCCDSYEEYDVEKIHVH</sequence>
<feature type="signal peptide" evidence="2">
    <location>
        <begin position="1"/>
        <end position="12"/>
    </location>
</feature>
<feature type="chain" id="PRO_0000290318" description="Spike glycoprotein">
    <location>
        <begin position="13"/>
        <end position="1350"/>
    </location>
</feature>
<feature type="chain" id="PRO_0000290319" description="Spike protein S1">
    <location>
        <begin position="13"/>
        <end position="749"/>
    </location>
</feature>
<feature type="chain" id="PRO_0000290320" description="Spike protein S2">
    <location>
        <begin position="750"/>
        <end position="1235"/>
    </location>
</feature>
<feature type="chain" id="PRO_0000444058" description="Spike protein S2'" evidence="2">
    <location>
        <begin position="885"/>
        <end position="1350"/>
    </location>
</feature>
<feature type="topological domain" description="Extracellular" evidence="2">
    <location>
        <begin position="13"/>
        <end position="1295"/>
    </location>
</feature>
<feature type="transmembrane region" description="Helical" evidence="2">
    <location>
        <begin position="1296"/>
        <end position="1316"/>
    </location>
</feature>
<feature type="topological domain" description="Cytoplasmic" evidence="2">
    <location>
        <begin position="1317"/>
        <end position="1350"/>
    </location>
</feature>
<feature type="domain" description="BetaCoV S1-NTD" evidence="4">
    <location>
        <begin position="21"/>
        <end position="356"/>
    </location>
</feature>
<feature type="domain" description="BetaCoV S1-CTD" evidence="3">
    <location>
        <begin position="386"/>
        <end position="592"/>
    </location>
</feature>
<feature type="region of interest" description="Fusion peptide 1" evidence="2">
    <location>
        <begin position="885"/>
        <end position="906"/>
    </location>
</feature>
<feature type="region of interest" description="Fusion peptide 2" evidence="2">
    <location>
        <begin position="904"/>
        <end position="926"/>
    </location>
</feature>
<feature type="region of interest" description="Heptad repeat 1" evidence="2">
    <location>
        <begin position="991"/>
        <end position="1041"/>
    </location>
</feature>
<feature type="region of interest" description="Heptad repeat 2" evidence="2">
    <location>
        <begin position="1245"/>
        <end position="1284"/>
    </location>
</feature>
<feature type="coiled-coil region" evidence="2">
    <location>
        <begin position="1020"/>
        <end position="1064"/>
    </location>
</feature>
<feature type="coiled-coil region" evidence="2">
    <location>
        <begin position="1257"/>
        <end position="1285"/>
    </location>
</feature>
<feature type="short sequence motif" description="KxHxx" evidence="2">
    <location>
        <begin position="1348"/>
        <end position="1350"/>
    </location>
</feature>
<feature type="site" description="Cleavage" evidence="1">
    <location>
        <begin position="749"/>
        <end position="750"/>
    </location>
</feature>
<feature type="site" description="Cleavage" evidence="2">
    <location>
        <begin position="884"/>
        <end position="885"/>
    </location>
</feature>
<feature type="glycosylation site" description="N-linked (GlcNAc...) asparagine; by host" evidence="2">
    <location>
        <position position="30"/>
    </location>
</feature>
<feature type="glycosylation site" description="N-linked (GlcNAc...) asparagine; by host" evidence="2">
    <location>
        <position position="71"/>
    </location>
</feature>
<feature type="glycosylation site" description="N-linked (GlcNAc...) asparagine; by host" evidence="2">
    <location>
        <position position="111"/>
    </location>
</feature>
<feature type="glycosylation site" description="N-linked (GlcNAc...) asparagine; by host" evidence="2">
    <location>
        <position position="132"/>
    </location>
</feature>
<feature type="glycosylation site" description="N-linked (GlcNAc...) asparagine; by host" evidence="2">
    <location>
        <position position="162"/>
    </location>
</feature>
<feature type="glycosylation site" description="N-linked (GlcNAc...) asparagine; by host" evidence="2">
    <location>
        <position position="172"/>
    </location>
</feature>
<feature type="glycosylation site" description="N-linked (GlcNAc...) asparagine; by host" evidence="2">
    <location>
        <position position="227"/>
    </location>
</feature>
<feature type="glycosylation site" description="N-linked (GlcNAc...) asparagine; by host" evidence="2">
    <location>
        <position position="241"/>
    </location>
</feature>
<feature type="glycosylation site" description="N-linked (GlcNAc...) asparagine; by host" evidence="2">
    <location>
        <position position="384"/>
    </location>
</feature>
<feature type="glycosylation site" description="N-linked (GlcNAc...) asparagine; by host" evidence="2">
    <location>
        <position position="415"/>
    </location>
</feature>
<feature type="glycosylation site" description="N-linked (GlcNAc...) asparagine; by host" evidence="2">
    <location>
        <position position="492"/>
    </location>
</feature>
<feature type="glycosylation site" description="N-linked (GlcNAc...) asparagine; by host" evidence="2">
    <location>
        <position position="624"/>
    </location>
</feature>
<feature type="glycosylation site" description="N-linked (GlcNAc...) asparagine; by host" evidence="2">
    <location>
        <position position="723"/>
    </location>
</feature>
<feature type="glycosylation site" description="N-linked (GlcNAc...) asparagine; by host" evidence="2">
    <location>
        <position position="762"/>
    </location>
</feature>
<feature type="glycosylation site" description="N-linked (GlcNAc...) asparagine; by host" evidence="2">
    <location>
        <position position="773"/>
    </location>
</feature>
<feature type="glycosylation site" description="N-linked (GlcNAc...) asparagine; by host" evidence="2">
    <location>
        <position position="784"/>
    </location>
</feature>
<feature type="glycosylation site" description="N-linked (GlcNAc...) asparagine; by host" evidence="2">
    <location>
        <position position="869"/>
    </location>
</feature>
<feature type="glycosylation site" description="N-linked (GlcNAc...) asparagine; by host" evidence="2">
    <location>
        <position position="1142"/>
    </location>
</feature>
<feature type="glycosylation site" description="N-linked (GlcNAc...) asparagine; by host" evidence="2">
    <location>
        <position position="1145"/>
    </location>
</feature>
<feature type="glycosylation site" description="N-linked (GlcNAc...) asparagine; by host" evidence="2">
    <location>
        <position position="1172"/>
    </location>
</feature>
<feature type="glycosylation site" description="N-linked (GlcNAc...) asparagine; by host" evidence="2">
    <location>
        <position position="1224"/>
    </location>
</feature>
<feature type="glycosylation site" description="N-linked (GlcNAc...) asparagine; by host" evidence="2">
    <location>
        <position position="1240"/>
    </location>
</feature>
<feature type="glycosylation site" description="N-linked (GlcNAc...) asparagine; by host" evidence="2">
    <location>
        <position position="1255"/>
    </location>
</feature>
<feature type="glycosylation site" description="N-linked (GlcNAc...) asparagine; by host" evidence="2">
    <location>
        <position position="1276"/>
    </location>
</feature>
<feature type="glycosylation site" description="N-linked (GlcNAc...) asparagine; by host" evidence="2">
    <location>
        <position position="1287"/>
    </location>
</feature>
<feature type="disulfide bond" evidence="4">
    <location>
        <begin position="191"/>
        <end position="242"/>
    </location>
</feature>
<feature type="disulfide bond" evidence="4">
    <location>
        <begin position="344"/>
        <end position="354"/>
    </location>
</feature>
<feature type="disulfide bond" evidence="3">
    <location>
        <begin position="388"/>
        <end position="412"/>
    </location>
</feature>
<feature type="disulfide bond" evidence="3">
    <location>
        <begin position="430"/>
        <end position="483"/>
    </location>
</feature>
<feature type="disulfide bond" evidence="3">
    <location>
        <begin position="442"/>
        <end position="590"/>
    </location>
</feature>
<feature type="disulfide bond" evidence="2">
    <location>
        <begin position="909"/>
        <end position="922"/>
    </location>
</feature>
<organismHost>
    <name type="scientific">Tylonycteris pachypus</name>
    <name type="common">Lesser bamboo bat</name>
    <name type="synonym">Vespertilio pachypus</name>
    <dbReference type="NCBI Taxonomy" id="258959"/>
</organismHost>
<organism>
    <name type="scientific">Bat coronavirus 133/2005</name>
    <name type="common">BtCoV</name>
    <name type="synonym">BtCoV/133/2005</name>
    <dbReference type="NCBI Taxonomy" id="389230"/>
    <lineage>
        <taxon>Viruses</taxon>
        <taxon>Riboviria</taxon>
        <taxon>Orthornavirae</taxon>
        <taxon>Pisuviricota</taxon>
        <taxon>Pisoniviricetes</taxon>
        <taxon>Nidovirales</taxon>
        <taxon>Cornidovirineae</taxon>
        <taxon>Coronaviridae</taxon>
        <taxon>Orthocoronavirinae</taxon>
        <taxon>Betacoronavirus</taxon>
        <taxon>Merbecovirus</taxon>
        <taxon>Bat coronavirus HKU4</taxon>
    </lineage>
</organism>
<gene>
    <name evidence="2" type="primary">S</name>
    <name type="ORF">2</name>
</gene>
<evidence type="ECO:0000250" key="1"/>
<evidence type="ECO:0000255" key="2">
    <source>
        <dbReference type="HAMAP-Rule" id="MF_04099"/>
    </source>
</evidence>
<evidence type="ECO:0000255" key="3">
    <source>
        <dbReference type="PROSITE-ProRule" id="PRU01269"/>
    </source>
</evidence>
<evidence type="ECO:0000255" key="4">
    <source>
        <dbReference type="PROSITE-ProRule" id="PRU01270"/>
    </source>
</evidence>
<dbReference type="EMBL" id="DQ648794">
    <property type="protein sequence ID" value="ABG47052.1"/>
    <property type="molecule type" value="Genomic_RNA"/>
</dbReference>
<dbReference type="SMR" id="Q0Q4F2"/>
<dbReference type="GlyCosmos" id="Q0Q4F2">
    <property type="glycosylation" value="25 sites, No reported glycans"/>
</dbReference>
<dbReference type="Proteomes" id="UP000007449">
    <property type="component" value="Genome"/>
</dbReference>
<dbReference type="GO" id="GO:0044173">
    <property type="term" value="C:host cell endoplasmic reticulum-Golgi intermediate compartment membrane"/>
    <property type="evidence" value="ECO:0007669"/>
    <property type="project" value="UniProtKB-SubCell"/>
</dbReference>
<dbReference type="GO" id="GO:0020002">
    <property type="term" value="C:host cell plasma membrane"/>
    <property type="evidence" value="ECO:0007669"/>
    <property type="project" value="UniProtKB-SubCell"/>
</dbReference>
<dbReference type="GO" id="GO:0016020">
    <property type="term" value="C:membrane"/>
    <property type="evidence" value="ECO:0007669"/>
    <property type="project" value="UniProtKB-UniRule"/>
</dbReference>
<dbReference type="GO" id="GO:0019031">
    <property type="term" value="C:viral envelope"/>
    <property type="evidence" value="ECO:0007669"/>
    <property type="project" value="UniProtKB-UniRule"/>
</dbReference>
<dbReference type="GO" id="GO:0055036">
    <property type="term" value="C:virion membrane"/>
    <property type="evidence" value="ECO:0007669"/>
    <property type="project" value="UniProtKB-SubCell"/>
</dbReference>
<dbReference type="GO" id="GO:0075509">
    <property type="term" value="P:endocytosis involved in viral entry into host cell"/>
    <property type="evidence" value="ECO:0007669"/>
    <property type="project" value="UniProtKB-UniRule"/>
</dbReference>
<dbReference type="GO" id="GO:0039654">
    <property type="term" value="P:fusion of virus membrane with host endosome membrane"/>
    <property type="evidence" value="ECO:0007669"/>
    <property type="project" value="UniProtKB-UniRule"/>
</dbReference>
<dbReference type="GO" id="GO:0019064">
    <property type="term" value="P:fusion of virus membrane with host plasma membrane"/>
    <property type="evidence" value="ECO:0007669"/>
    <property type="project" value="UniProtKB-UniRule"/>
</dbReference>
<dbReference type="GO" id="GO:0046813">
    <property type="term" value="P:receptor-mediated virion attachment to host cell"/>
    <property type="evidence" value="ECO:0007669"/>
    <property type="project" value="UniProtKB-UniRule"/>
</dbReference>
<dbReference type="CDD" id="cd21487">
    <property type="entry name" value="bat_HKU4-like_Spike_S1_RBD"/>
    <property type="match status" value="1"/>
</dbReference>
<dbReference type="CDD" id="cd21626">
    <property type="entry name" value="MERS-CoV-like_Spike_S1_NTD"/>
    <property type="match status" value="1"/>
</dbReference>
<dbReference type="CDD" id="cd22379">
    <property type="entry name" value="MERS-CoV-like_Spike_SD1-2_S1-S2_S2"/>
    <property type="match status" value="1"/>
</dbReference>
<dbReference type="Gene3D" id="1.20.5.300">
    <property type="match status" value="2"/>
</dbReference>
<dbReference type="Gene3D" id="2.20.210.30">
    <property type="match status" value="1"/>
</dbReference>
<dbReference type="Gene3D" id="3.30.70.1840">
    <property type="match status" value="1"/>
</dbReference>
<dbReference type="Gene3D" id="2.60.120.960">
    <property type="entry name" value="Spike glycoprotein, N-terminal domain"/>
    <property type="match status" value="1"/>
</dbReference>
<dbReference type="HAMAP" id="MF_04099">
    <property type="entry name" value="BETA_CORONA_SPIKE"/>
    <property type="match status" value="1"/>
</dbReference>
<dbReference type="InterPro" id="IPR032500">
    <property type="entry name" value="bCoV_S1_N"/>
</dbReference>
<dbReference type="InterPro" id="IPR042578">
    <property type="entry name" value="BETA_CORONA_SPIKE"/>
</dbReference>
<dbReference type="InterPro" id="IPR043607">
    <property type="entry name" value="CoV_S1_C"/>
</dbReference>
<dbReference type="InterPro" id="IPR043473">
    <property type="entry name" value="S2_sf_CoV"/>
</dbReference>
<dbReference type="InterPro" id="IPR043002">
    <property type="entry name" value="Spike_N_sf"/>
</dbReference>
<dbReference type="InterPro" id="IPR044337">
    <property type="entry name" value="Spike_S1_N_MERS-CoV-like"/>
</dbReference>
<dbReference type="InterPro" id="IPR018548">
    <property type="entry name" value="Spike_S1_RBD_bCoV"/>
</dbReference>
<dbReference type="InterPro" id="IPR044378">
    <property type="entry name" value="Spike_S1_RBD_HKU4-like"/>
</dbReference>
<dbReference type="InterPro" id="IPR036326">
    <property type="entry name" value="Spike_S1_RBD_sf_bCoV"/>
</dbReference>
<dbReference type="InterPro" id="IPR002552">
    <property type="entry name" value="Spike_S2_CoV"/>
</dbReference>
<dbReference type="InterPro" id="IPR043614">
    <property type="entry name" value="Spike_S2_CoV_C"/>
</dbReference>
<dbReference type="InterPro" id="IPR044873">
    <property type="entry name" value="Spike_S2_CoV_HR1"/>
</dbReference>
<dbReference type="InterPro" id="IPR044874">
    <property type="entry name" value="Spike_S2_CoV_HR2"/>
</dbReference>
<dbReference type="Pfam" id="PF16451">
    <property type="entry name" value="bCoV_S1_N"/>
    <property type="match status" value="1"/>
</dbReference>
<dbReference type="Pfam" id="PF09408">
    <property type="entry name" value="bCoV_S1_RBD"/>
    <property type="match status" value="1"/>
</dbReference>
<dbReference type="Pfam" id="PF19209">
    <property type="entry name" value="CoV_S1_C"/>
    <property type="match status" value="1"/>
</dbReference>
<dbReference type="Pfam" id="PF01601">
    <property type="entry name" value="CoV_S2"/>
    <property type="match status" value="1"/>
</dbReference>
<dbReference type="Pfam" id="PF19214">
    <property type="entry name" value="CoV_S2_C"/>
    <property type="match status" value="1"/>
</dbReference>
<dbReference type="SUPFAM" id="SSF111474">
    <property type="entry name" value="Coronavirus S2 glycoprotein"/>
    <property type="match status" value="2"/>
</dbReference>
<dbReference type="SUPFAM" id="SSF143587">
    <property type="entry name" value="SARS receptor-binding domain-like"/>
    <property type="match status" value="1"/>
</dbReference>
<dbReference type="PROSITE" id="PS51921">
    <property type="entry name" value="BCOV_S1_CTD"/>
    <property type="match status" value="1"/>
</dbReference>
<dbReference type="PROSITE" id="PS51922">
    <property type="entry name" value="BCOV_S1_NTD"/>
    <property type="match status" value="1"/>
</dbReference>
<dbReference type="PROSITE" id="PS51923">
    <property type="entry name" value="COV_S2_HR1"/>
    <property type="match status" value="1"/>
</dbReference>
<dbReference type="PROSITE" id="PS51924">
    <property type="entry name" value="COV_S2_HR2"/>
    <property type="match status" value="1"/>
</dbReference>
<name>SPIKE_BC133</name>
<accession>Q0Q4F2</accession>
<comment type="function">
    <molecule>Spike protein S1</molecule>
    <text evidence="2">Attaches the virion to the cell membrane by interacting with host receptor, initiating the infection.</text>
</comment>
<comment type="function">
    <molecule>Spike protein S2</molecule>
    <text evidence="2">Mediates fusion of the virion and cellular membranes by acting as a class I viral fusion protein. Under the current model, the protein has at least three conformational states: pre-fusion native state, pre-hairpin intermediate state, and post-fusion hairpin state. During viral and target cell membrane fusion, the coiled coil regions (heptad repeats) assume a trimer-of-hairpins structure, positioning the fusion peptide in close proximity to the C-terminal region of the ectodomain. The formation of this structure appears to drive apposition and subsequent fusion of viral and target cell membranes.</text>
</comment>
<comment type="function">
    <molecule>Spike protein S2'</molecule>
    <text evidence="2">Acts as a viral fusion peptide which is unmasked following S2 cleavage occurring upon virus endocytosis.</text>
</comment>
<comment type="subunit">
    <text evidence="2">Homotrimer; each monomer consists of a S1 and a S2 subunit. The resulting peplomers protrude from the virus surface as spikes.</text>
</comment>
<comment type="subcellular location">
    <subcellularLocation>
        <location evidence="2">Virion membrane</location>
        <topology evidence="2">Single-pass type I membrane protein</topology>
    </subcellularLocation>
    <subcellularLocation>
        <location evidence="2">Host endoplasmic reticulum-Golgi intermediate compartment membrane</location>
        <topology evidence="2">Single-pass type I membrane protein</topology>
    </subcellularLocation>
    <subcellularLocation>
        <location evidence="2">Host cell membrane</location>
        <topology evidence="2">Single-pass type I membrane protein</topology>
    </subcellularLocation>
    <text evidence="2">Accumulates in the endoplasmic reticulum-Golgi intermediate compartment, where it participates in virus particle assembly. Some S oligomers are transported to the host plasma membrane, where they may mediate cell-cell fusion.</text>
</comment>
<comment type="domain">
    <text evidence="2">Fusion peptide 1 (FP1) and fusion peptide 2 (FP2) function cooperatively and have a membrane-ordering effect on lipid headgroups and shallow hydrophobic regions of target bilayers. They are considered as two domains of an extended, bipartite FP. The membrane-ordering activity is calcium-dependent and also dependent on correct folding, which is maintained by an internal disulfide bond in FP2.</text>
</comment>
<comment type="PTM">
    <text evidence="1">Specific enzymatic cleavages in vivo yield mature proteins.</text>
</comment>
<comment type="PTM">
    <text evidence="2">Specific enzymatic cleavages in vivo yield mature proteins. The precursor is processed into S1 and S2 by host cell furin or another cellular protease to yield the mature S1 and S2 proteins. Additionally, a second cleavage leads to the release of a fusion peptide after viral attachment to host cell receptor.</text>
</comment>
<comment type="PTM">
    <text evidence="2">The cytoplasmic Cys-rich domain is palmitoylated. Spike glycoprotein is digested within host endosomes.</text>
</comment>
<comment type="similarity">
    <text evidence="2">Belongs to the betacoronaviruses spike protein family.</text>
</comment>
<reference key="1">
    <citation type="journal article" date="2006" name="J. Virol.">
        <title>Prevalence and genetic diversity of coronaviruses in bats from China.</title>
        <authorList>
            <person name="Tang X.C."/>
            <person name="Zhang J.X."/>
            <person name="Zhang S.Y."/>
            <person name="Wang P."/>
            <person name="Fan X.H."/>
            <person name="Li L.F."/>
            <person name="Li G."/>
            <person name="Dong B.Q."/>
            <person name="Liu W."/>
            <person name="Cheung C.L."/>
            <person name="Xu K.M."/>
            <person name="Song W.J."/>
            <person name="Vijaykrishna D."/>
            <person name="Poon L.L.M."/>
            <person name="Peiris J.S.M."/>
            <person name="Smith G.J."/>
            <person name="Chen H."/>
            <person name="Guan Y."/>
        </authorList>
    </citation>
    <scope>NUCLEOTIDE SEQUENCE [GENOMIC RNA]</scope>
</reference>
<protein>
    <recommendedName>
        <fullName evidence="2">Spike glycoprotein</fullName>
        <shortName evidence="2">S glycoprotein</shortName>
    </recommendedName>
    <alternativeName>
        <fullName evidence="2">E2</fullName>
    </alternativeName>
    <alternativeName>
        <fullName evidence="2">Peplomer protein</fullName>
    </alternativeName>
    <component>
        <recommendedName>
            <fullName evidence="2">Spike protein S1</fullName>
        </recommendedName>
    </component>
    <component>
        <recommendedName>
            <fullName evidence="2">Spike protein S2</fullName>
        </recommendedName>
    </component>
    <component>
        <recommendedName>
            <fullName evidence="2">Spike protein S2'</fullName>
        </recommendedName>
    </component>
</protein>
<proteinExistence type="inferred from homology"/>
<keyword id="KW-0175">Coiled coil</keyword>
<keyword id="KW-1015">Disulfide bond</keyword>
<keyword id="KW-1170">Fusion of virus membrane with host endosomal membrane</keyword>
<keyword id="KW-1168">Fusion of virus membrane with host membrane</keyword>
<keyword id="KW-0325">Glycoprotein</keyword>
<keyword id="KW-1032">Host cell membrane</keyword>
<keyword id="KW-1043">Host membrane</keyword>
<keyword id="KW-0945">Host-virus interaction</keyword>
<keyword id="KW-0449">Lipoprotein</keyword>
<keyword id="KW-0472">Membrane</keyword>
<keyword id="KW-0564">Palmitate</keyword>
<keyword id="KW-0732">Signal</keyword>
<keyword id="KW-0812">Transmembrane</keyword>
<keyword id="KW-1133">Transmembrane helix</keyword>
<keyword id="KW-1161">Viral attachment to host cell</keyword>
<keyword id="KW-0261">Viral envelope protein</keyword>
<keyword id="KW-1162">Viral penetration into host cytoplasm</keyword>
<keyword id="KW-0946">Virion</keyword>
<keyword id="KW-0843">Virulence</keyword>
<keyword id="KW-1160">Virus entry into host cell</keyword>